<keyword id="KW-0997">Cell inner membrane</keyword>
<keyword id="KW-1003">Cell membrane</keyword>
<keyword id="KW-0418">Kinase</keyword>
<keyword id="KW-0472">Membrane</keyword>
<keyword id="KW-0597">Phosphoprotein</keyword>
<keyword id="KW-0598">Phosphotransferase system</keyword>
<keyword id="KW-1185">Reference proteome</keyword>
<keyword id="KW-0762">Sugar transport</keyword>
<keyword id="KW-0808">Transferase</keyword>
<keyword id="KW-0812">Transmembrane</keyword>
<keyword id="KW-1133">Transmembrane helix</keyword>
<keyword id="KW-0813">Transport</keyword>
<gene>
    <name type="primary">srlE</name>
    <name evidence="5" type="synonym">gutA</name>
    <name type="synonym">gutE</name>
    <name type="ordered locus">b2703</name>
    <name type="ordered locus">JW5430</name>
</gene>
<name>PTHB_ECOLI</name>
<protein>
    <recommendedName>
        <fullName evidence="5">PTS system glucitol/sorbitol-specific EIIB component</fullName>
        <ecNumber evidence="3">2.7.1.198</ecNumber>
    </recommendedName>
    <alternativeName>
        <fullName evidence="5">EII-Gut</fullName>
    </alternativeName>
    <alternativeName>
        <fullName evidence="5">Enzyme II-Gut</fullName>
    </alternativeName>
    <alternativeName>
        <fullName evidence="5">Glucitol/sorbitol-specific phosphotransferase enzyme IIB component</fullName>
    </alternativeName>
</protein>
<reference key="1">
    <citation type="journal article" date="1987" name="J. Biol. Chem.">
        <title>Glucitol-specific enzymes of the phosphotransferase system in Escherichia coli. Nucleotide sequence of the gut operon.</title>
        <authorList>
            <person name="Yamada M."/>
            <person name="Saier M.H. Jr."/>
        </authorList>
    </citation>
    <scope>NUCLEOTIDE SEQUENCE [GENOMIC DNA]</scope>
    <scope>SUBCELLULAR LOCATION</scope>
</reference>
<reference key="2">
    <citation type="journal article" date="1998" name="Microbiology">
        <title>The glucitol permease of Escherichia coli: a tripartite permease of the phosphotransferase system.</title>
        <authorList>
            <person name="Reizer J."/>
            <person name="Reizer A."/>
            <person name="Yamada M."/>
            <person name="Saier M.H. Jr."/>
        </authorList>
    </citation>
    <scope>NUCLEOTIDE SEQUENCE [GENOMIC DNA]</scope>
    <scope>SEQUENCE REVISION</scope>
</reference>
<reference key="3">
    <citation type="journal article" date="1997" name="DNA Res.">
        <title>Construction of a contiguous 874-kb sequence of the Escherichia coli-K12 genome corresponding to 50.0-68.8 min on the linkage map and analysis of its sequence features.</title>
        <authorList>
            <person name="Yamamoto Y."/>
            <person name="Aiba H."/>
            <person name="Baba T."/>
            <person name="Hayashi K."/>
            <person name="Inada T."/>
            <person name="Isono K."/>
            <person name="Itoh T."/>
            <person name="Kimura S."/>
            <person name="Kitagawa M."/>
            <person name="Makino K."/>
            <person name="Miki T."/>
            <person name="Mitsuhashi N."/>
            <person name="Mizobuchi K."/>
            <person name="Mori H."/>
            <person name="Nakade S."/>
            <person name="Nakamura Y."/>
            <person name="Nashimoto H."/>
            <person name="Oshima T."/>
            <person name="Oyama S."/>
            <person name="Saito N."/>
            <person name="Sampei G."/>
            <person name="Satoh Y."/>
            <person name="Sivasundaram S."/>
            <person name="Tagami H."/>
            <person name="Takahashi H."/>
            <person name="Takeda J."/>
            <person name="Takemoto K."/>
            <person name="Uehara K."/>
            <person name="Wada C."/>
            <person name="Yamagata S."/>
            <person name="Horiuchi T."/>
        </authorList>
    </citation>
    <scope>NUCLEOTIDE SEQUENCE [LARGE SCALE GENOMIC DNA]</scope>
    <source>
        <strain>K12 / W3110 / ATCC 27325 / DSM 5911</strain>
    </source>
</reference>
<reference key="4">
    <citation type="journal article" date="1997" name="Science">
        <title>The complete genome sequence of Escherichia coli K-12.</title>
        <authorList>
            <person name="Blattner F.R."/>
            <person name="Plunkett G. III"/>
            <person name="Bloch C.A."/>
            <person name="Perna N.T."/>
            <person name="Burland V."/>
            <person name="Riley M."/>
            <person name="Collado-Vides J."/>
            <person name="Glasner J.D."/>
            <person name="Rode C.K."/>
            <person name="Mayhew G.F."/>
            <person name="Gregor J."/>
            <person name="Davis N.W."/>
            <person name="Kirkpatrick H.A."/>
            <person name="Goeden M.A."/>
            <person name="Rose D.J."/>
            <person name="Mau B."/>
            <person name="Shao Y."/>
        </authorList>
    </citation>
    <scope>NUCLEOTIDE SEQUENCE [LARGE SCALE GENOMIC DNA]</scope>
    <source>
        <strain>K12 / MG1655 / ATCC 47076</strain>
    </source>
</reference>
<reference key="5">
    <citation type="journal article" date="2006" name="Nucleic Acids Res.">
        <title>Escherichia coli K-12: a cooperatively developed annotation snapshot -- 2005.</title>
        <authorList>
            <person name="Riley M."/>
            <person name="Abe T."/>
            <person name="Arnaud M.B."/>
            <person name="Berlyn M.K.B."/>
            <person name="Blattner F.R."/>
            <person name="Chaudhuri R.R."/>
            <person name="Glasner J.D."/>
            <person name="Horiuchi T."/>
            <person name="Keseler I.M."/>
            <person name="Kosuge T."/>
            <person name="Mori H."/>
            <person name="Perna N.T."/>
            <person name="Plunkett G. III"/>
            <person name="Rudd K.E."/>
            <person name="Serres M.H."/>
            <person name="Thomas G.H."/>
            <person name="Thomson N.R."/>
            <person name="Wishart D."/>
            <person name="Wanner B.L."/>
        </authorList>
    </citation>
    <scope>SEQUENCE REVISION TO 128 AND 230</scope>
</reference>
<reference key="6">
    <citation type="journal article" date="2006" name="Mol. Syst. Biol.">
        <title>Highly accurate genome sequences of Escherichia coli K-12 strains MG1655 and W3110.</title>
        <authorList>
            <person name="Hayashi K."/>
            <person name="Morooka N."/>
            <person name="Yamamoto Y."/>
            <person name="Fujita K."/>
            <person name="Isono K."/>
            <person name="Choi S."/>
            <person name="Ohtsubo E."/>
            <person name="Baba T."/>
            <person name="Wanner B.L."/>
            <person name="Mori H."/>
            <person name="Horiuchi T."/>
        </authorList>
    </citation>
    <scope>NUCLEOTIDE SEQUENCE [LARGE SCALE GENOMIC DNA]</scope>
    <source>
        <strain>K12 / W3110 / ATCC 27325 / DSM 5911</strain>
    </source>
</reference>
<reference key="7">
    <citation type="journal article" date="1975" name="J. Bacteriol.">
        <title>Nature and properties of hexitol transport systems in Escherichia coli.</title>
        <authorList>
            <person name="Lengeler J."/>
        </authorList>
    </citation>
    <scope>FUNCTION</scope>
    <scope>CATALYTIC ACTIVITY</scope>
    <scope>BIOPHYSICOCHEMICAL PROPERTIES</scope>
    <scope>SUBSTRATE SPECIFICITY</scope>
</reference>
<reference key="8">
    <citation type="journal article" date="1988" name="J. Mol. Biol.">
        <title>Positive and negative regulators for glucitol (gut) operon expression in Escherichia coli.</title>
        <authorList>
            <person name="Yamada M."/>
            <person name="Saier M.H. Jr."/>
        </authorList>
    </citation>
    <scope>INDUCTION</scope>
</reference>
<reference key="9">
    <citation type="journal article" date="2005" name="Science">
        <title>Global topology analysis of the Escherichia coli inner membrane proteome.</title>
        <authorList>
            <person name="Daley D.O."/>
            <person name="Rapp M."/>
            <person name="Granseth E."/>
            <person name="Melen K."/>
            <person name="Drew D."/>
            <person name="von Heijne G."/>
        </authorList>
    </citation>
    <scope>TOPOLOGY [LARGE SCALE ANALYSIS]</scope>
    <source>
        <strain>K12 / MG1655 / ATCC 47076</strain>
    </source>
</reference>
<dbReference type="EC" id="2.7.1.198" evidence="3"/>
<dbReference type="EMBL" id="J02708">
    <property type="protein sequence ID" value="AAC13416.1"/>
    <property type="molecule type" value="Genomic_DNA"/>
</dbReference>
<dbReference type="EMBL" id="U00096">
    <property type="protein sequence ID" value="AAT48149.1"/>
    <property type="molecule type" value="Genomic_DNA"/>
</dbReference>
<dbReference type="EMBL" id="AP009048">
    <property type="protein sequence ID" value="BAA16564.2"/>
    <property type="molecule type" value="Genomic_DNA"/>
</dbReference>
<dbReference type="PIR" id="A26725">
    <property type="entry name" value="WQEC2S"/>
</dbReference>
<dbReference type="RefSeq" id="WP_000148878.1">
    <property type="nucleotide sequence ID" value="NZ_LN832404.1"/>
</dbReference>
<dbReference type="RefSeq" id="YP_026181.1">
    <property type="nucleotide sequence ID" value="NC_000913.3"/>
</dbReference>
<dbReference type="BioGRID" id="4262075">
    <property type="interactions" value="19"/>
</dbReference>
<dbReference type="ComplexPortal" id="CPX-5969">
    <property type="entry name" value="Glucitol/sorbitol enzyme II complex"/>
</dbReference>
<dbReference type="FunCoup" id="P56580">
    <property type="interactions" value="91"/>
</dbReference>
<dbReference type="STRING" id="511145.b2703"/>
<dbReference type="TCDB" id="4.A.4.1.1">
    <property type="family name" value="the pts glucitol (gut) family"/>
</dbReference>
<dbReference type="jPOST" id="P56580"/>
<dbReference type="PaxDb" id="511145-b2703"/>
<dbReference type="EnsemblBacteria" id="AAT48149">
    <property type="protein sequence ID" value="AAT48149"/>
    <property type="gene ID" value="b2703"/>
</dbReference>
<dbReference type="GeneID" id="948933"/>
<dbReference type="KEGG" id="ecj:JW5430"/>
<dbReference type="KEGG" id="eco:b2703"/>
<dbReference type="KEGG" id="ecoc:C3026_14880"/>
<dbReference type="PATRIC" id="fig|1411691.4.peg.4039"/>
<dbReference type="EchoBASE" id="EB4116"/>
<dbReference type="eggNOG" id="COG3732">
    <property type="taxonomic scope" value="Bacteria"/>
</dbReference>
<dbReference type="HOGENOM" id="CLU_054195_0_0_6"/>
<dbReference type="InParanoid" id="P56580"/>
<dbReference type="OMA" id="HKFIYIT"/>
<dbReference type="OrthoDB" id="4774329at2"/>
<dbReference type="PhylomeDB" id="P56580"/>
<dbReference type="BioCyc" id="EcoCyc:GUTA-MONOMER"/>
<dbReference type="BioCyc" id="MetaCyc:GUTA-MONOMER"/>
<dbReference type="PRO" id="PR:P56580"/>
<dbReference type="Proteomes" id="UP000000625">
    <property type="component" value="Chromosome"/>
</dbReference>
<dbReference type="GO" id="GO:0005886">
    <property type="term" value="C:plasma membrane"/>
    <property type="evidence" value="ECO:0000314"/>
    <property type="project" value="EcoCyc"/>
</dbReference>
<dbReference type="GO" id="GO:1902495">
    <property type="term" value="C:transmembrane transporter complex"/>
    <property type="evidence" value="ECO:0000303"/>
    <property type="project" value="ComplexPortal"/>
</dbReference>
<dbReference type="GO" id="GO:0016301">
    <property type="term" value="F:kinase activity"/>
    <property type="evidence" value="ECO:0007669"/>
    <property type="project" value="UniProtKB-KW"/>
</dbReference>
<dbReference type="GO" id="GO:0008982">
    <property type="term" value="F:protein-N(PI)-phosphohistidine-sugar phosphotransferase activity"/>
    <property type="evidence" value="ECO:0007669"/>
    <property type="project" value="InterPro"/>
</dbReference>
<dbReference type="GO" id="GO:0090563">
    <property type="term" value="F:protein-phosphocysteine-sugar phosphotransferase activity"/>
    <property type="evidence" value="ECO:0000314"/>
    <property type="project" value="UniProtKB"/>
</dbReference>
<dbReference type="GO" id="GO:0009401">
    <property type="term" value="P:phosphoenolpyruvate-dependent sugar phosphotransferase system"/>
    <property type="evidence" value="ECO:0000314"/>
    <property type="project" value="UniProtKB"/>
</dbReference>
<dbReference type="GO" id="GO:0015795">
    <property type="term" value="P:sorbitol transmembrane transport"/>
    <property type="evidence" value="ECO:0000303"/>
    <property type="project" value="ComplexPortal"/>
</dbReference>
<dbReference type="InterPro" id="IPR011638">
    <property type="entry name" value="PTS_EIIBC_GUT_C"/>
</dbReference>
<dbReference type="InterPro" id="IPR011618">
    <property type="entry name" value="PTS_EIIBC_GUT_N"/>
</dbReference>
<dbReference type="InterPro" id="IPR004702">
    <property type="entry name" value="PTS_sorb_EIIBC"/>
</dbReference>
<dbReference type="NCBIfam" id="TIGR00825">
    <property type="entry name" value="EIIBC-GUT"/>
    <property type="match status" value="1"/>
</dbReference>
<dbReference type="PANTHER" id="PTHR39427">
    <property type="match status" value="1"/>
</dbReference>
<dbReference type="PANTHER" id="PTHR39427:SF1">
    <property type="entry name" value="PTS SYSTEM GLUCITOL_SORBITOL-SPECIFIC EIIB COMPONENT"/>
    <property type="match status" value="1"/>
</dbReference>
<dbReference type="Pfam" id="PF07663">
    <property type="entry name" value="EIIBC-GUT_C"/>
    <property type="match status" value="1"/>
</dbReference>
<dbReference type="Pfam" id="PF03612">
    <property type="entry name" value="EIIBC-GUT_N"/>
    <property type="match status" value="1"/>
</dbReference>
<dbReference type="PROSITE" id="PS51102">
    <property type="entry name" value="PTS_EIIB_TYPE_5"/>
    <property type="match status" value="1"/>
</dbReference>
<comment type="function">
    <text evidence="3">The phosphoenolpyruvate-dependent sugar phosphotransferase system (sugar PTS), a major carbohydrate active transport system, catalyzes the phosphorylation of incoming sugar substrates concomitantly with their translocation across the cell membrane. The enzyme II complex composed of SrlA, SrlB and SrlE is involved in glucitol/sorbitol transport. It can also use D-mannitol.</text>
</comment>
<comment type="catalytic activity">
    <reaction evidence="3">
        <text>D-sorbitol(out) + N(pros)-phospho-L-histidyl-[protein] = D-sorbitol 6-phosphate(in) + L-histidyl-[protein]</text>
        <dbReference type="Rhea" id="RHEA:42484"/>
        <dbReference type="Rhea" id="RHEA-COMP:9745"/>
        <dbReference type="Rhea" id="RHEA-COMP:9746"/>
        <dbReference type="ChEBI" id="CHEBI:17924"/>
        <dbReference type="ChEBI" id="CHEBI:29979"/>
        <dbReference type="ChEBI" id="CHEBI:60084"/>
        <dbReference type="ChEBI" id="CHEBI:64837"/>
        <dbReference type="EC" id="2.7.1.198"/>
    </reaction>
</comment>
<comment type="biophysicochemical properties">
    <kinetics>
        <KM evidence="3">44 uM for D-glucitol</KM>
        <KM evidence="3">60 uM for D-mannitol</KM>
        <Vmax evidence="3">7.2 nmol/min/mg enzyme with D-mannitol as substrate</Vmax>
        <Vmax evidence="3">0.83 nmol/min/mg enzyme with D-glucitol as substrate</Vmax>
    </kinetics>
</comment>
<comment type="subcellular location">
    <subcellularLocation>
        <location evidence="7">Cell inner membrane</location>
        <topology evidence="1 7">Multi-pass membrane protein</topology>
    </subcellularLocation>
</comment>
<comment type="induction">
    <text evidence="4">Regulated by an unusual system which consists of the activator GutM and the repressor GutR in addition to the cAMP-CRP complex.</text>
</comment>
<comment type="domain">
    <text evidence="2">The EIIB domain is phosphorylated by phospho-EIIA on a cysteinyl or histidyl residue, depending on the transported sugar. Then, it transfers the phosphoryl group to the sugar substrate concomitantly with the sugar uptake processed by the EIIC domain.</text>
</comment>
<organism>
    <name type="scientific">Escherichia coli (strain K12)</name>
    <dbReference type="NCBI Taxonomy" id="83333"/>
    <lineage>
        <taxon>Bacteria</taxon>
        <taxon>Pseudomonadati</taxon>
        <taxon>Pseudomonadota</taxon>
        <taxon>Gammaproteobacteria</taxon>
        <taxon>Enterobacterales</taxon>
        <taxon>Enterobacteriaceae</taxon>
        <taxon>Escherichia</taxon>
    </lineage>
</organism>
<evidence type="ECO:0000255" key="1"/>
<evidence type="ECO:0000255" key="2">
    <source>
        <dbReference type="PROSITE-ProRule" id="PRU00425"/>
    </source>
</evidence>
<evidence type="ECO:0000269" key="3">
    <source>
    </source>
</evidence>
<evidence type="ECO:0000269" key="4">
    <source>
    </source>
</evidence>
<evidence type="ECO:0000303" key="5">
    <source>
    </source>
</evidence>
<evidence type="ECO:0000305" key="6"/>
<evidence type="ECO:0000305" key="7">
    <source>
    </source>
</evidence>
<accession>P56580</accession>
<accession>P05705</accession>
<accession>P78103</accession>
<accession>P78215</accession>
<sequence length="319" mass="33332">MTHIRIEKGTGGWGGPLELKATPGKKIVYITAGTRPAIVDKLAQLTGWQAIDGFKEGEPAEAEIGVAVIDCGGTLRCGIYPKRRIPTINIHSTGKSGPLAQYIVEDIYVSGVKEENITVVGDATPQPSSVGRDYDTSKKITEQSDGLLAKVGMGMGSTVAVLFQSGRDTIDTVLKTILPFMAFVSALIGIIMASGLGDWIAHGLAPLASHPLGLVMLALICSFPLLSPFLGPGAVIAQVIGVLIGVQIGLGNIPPHLALPALFAINAQAACDFIPVGLSLAEARQDTVRVGVPSVLVSRFLTGAPTVLIAWFVSGFIYQ</sequence>
<feature type="chain" id="PRO_0000186562" description="PTS system glucitol/sorbitol-specific EIIB component">
    <location>
        <begin position="1"/>
        <end position="319"/>
    </location>
</feature>
<feature type="topological domain" description="Cytoplasmic" evidence="1">
    <location>
        <begin position="1"/>
        <end position="176"/>
    </location>
</feature>
<feature type="transmembrane region" description="Helical" evidence="1">
    <location>
        <begin position="177"/>
        <end position="197"/>
    </location>
</feature>
<feature type="topological domain" description="Periplasmic" evidence="1">
    <location>
        <begin position="198"/>
        <end position="199"/>
    </location>
</feature>
<feature type="transmembrane region" description="Helical" evidence="1">
    <location>
        <begin position="200"/>
        <end position="220"/>
    </location>
</feature>
<feature type="topological domain" description="Cytoplasmic" evidence="1">
    <location>
        <begin position="221"/>
        <end position="228"/>
    </location>
</feature>
<feature type="transmembrane region" description="Helical" evidence="1">
    <location>
        <begin position="229"/>
        <end position="249"/>
    </location>
</feature>
<feature type="topological domain" description="Periplasmic" evidence="1">
    <location>
        <begin position="250"/>
        <end position="256"/>
    </location>
</feature>
<feature type="transmembrane region" description="Helical" evidence="1">
    <location>
        <begin position="257"/>
        <end position="277"/>
    </location>
</feature>
<feature type="topological domain" description="Cytoplasmic" evidence="1">
    <location>
        <begin position="278"/>
        <end position="296"/>
    </location>
</feature>
<feature type="transmembrane region" description="Helical" evidence="1">
    <location>
        <begin position="297"/>
        <end position="317"/>
    </location>
</feature>
<feature type="topological domain" description="Periplasmic" evidence="1">
    <location>
        <begin position="318"/>
        <end position="319"/>
    </location>
</feature>
<feature type="domain" description="PTS EIIB type-5" evidence="2">
    <location>
        <begin position="1"/>
        <end position="178"/>
    </location>
</feature>
<feature type="active site" description="Phosphocysteine intermediate; for EIIB activity" evidence="6">
    <location>
        <position position="71"/>
    </location>
</feature>
<feature type="modified residue" description="Phosphocysteine; by EIIA" evidence="2">
    <location>
        <position position="71"/>
    </location>
</feature>
<proteinExistence type="evidence at protein level"/>